<evidence type="ECO:0000255" key="1">
    <source>
        <dbReference type="HAMAP-Rule" id="MF_00735"/>
    </source>
</evidence>
<protein>
    <recommendedName>
        <fullName evidence="1">Ribosomal protein L11 methyltransferase</fullName>
        <shortName evidence="1">L11 Mtase</shortName>
        <ecNumber evidence="1">2.1.1.-</ecNumber>
    </recommendedName>
</protein>
<proteinExistence type="inferred from homology"/>
<organism>
    <name type="scientific">Caldicellulosiruptor saccharolyticus (strain ATCC 43494 / DSM 8903 / Tp8T 6331)</name>
    <dbReference type="NCBI Taxonomy" id="351627"/>
    <lineage>
        <taxon>Bacteria</taxon>
        <taxon>Bacillati</taxon>
        <taxon>Bacillota</taxon>
        <taxon>Bacillota incertae sedis</taxon>
        <taxon>Caldicellulosiruptorales</taxon>
        <taxon>Caldicellulosiruptoraceae</taxon>
        <taxon>Caldicellulosiruptor</taxon>
    </lineage>
</organism>
<dbReference type="EC" id="2.1.1.-" evidence="1"/>
<dbReference type="EMBL" id="CP000679">
    <property type="protein sequence ID" value="ABP67341.1"/>
    <property type="molecule type" value="Genomic_DNA"/>
</dbReference>
<dbReference type="RefSeq" id="WP_011917275.1">
    <property type="nucleotide sequence ID" value="NC_009437.1"/>
</dbReference>
<dbReference type="SMR" id="A4XKA6"/>
<dbReference type="STRING" id="351627.Csac_1754"/>
<dbReference type="KEGG" id="csc:Csac_1754"/>
<dbReference type="eggNOG" id="COG2264">
    <property type="taxonomic scope" value="Bacteria"/>
</dbReference>
<dbReference type="HOGENOM" id="CLU_049382_0_1_9"/>
<dbReference type="OrthoDB" id="9785995at2"/>
<dbReference type="Proteomes" id="UP000000256">
    <property type="component" value="Chromosome"/>
</dbReference>
<dbReference type="GO" id="GO:0005737">
    <property type="term" value="C:cytoplasm"/>
    <property type="evidence" value="ECO:0007669"/>
    <property type="project" value="UniProtKB-SubCell"/>
</dbReference>
<dbReference type="GO" id="GO:0016279">
    <property type="term" value="F:protein-lysine N-methyltransferase activity"/>
    <property type="evidence" value="ECO:0007669"/>
    <property type="project" value="RHEA"/>
</dbReference>
<dbReference type="GO" id="GO:0032259">
    <property type="term" value="P:methylation"/>
    <property type="evidence" value="ECO:0007669"/>
    <property type="project" value="UniProtKB-KW"/>
</dbReference>
<dbReference type="CDD" id="cd02440">
    <property type="entry name" value="AdoMet_MTases"/>
    <property type="match status" value="1"/>
</dbReference>
<dbReference type="Gene3D" id="3.40.50.150">
    <property type="entry name" value="Vaccinia Virus protein VP39"/>
    <property type="match status" value="1"/>
</dbReference>
<dbReference type="HAMAP" id="MF_00735">
    <property type="entry name" value="Methyltr_PrmA"/>
    <property type="match status" value="1"/>
</dbReference>
<dbReference type="InterPro" id="IPR050078">
    <property type="entry name" value="Ribosomal_L11_MeTrfase_PrmA"/>
</dbReference>
<dbReference type="InterPro" id="IPR004498">
    <property type="entry name" value="Ribosomal_PrmA_MeTrfase"/>
</dbReference>
<dbReference type="InterPro" id="IPR029063">
    <property type="entry name" value="SAM-dependent_MTases_sf"/>
</dbReference>
<dbReference type="NCBIfam" id="TIGR00406">
    <property type="entry name" value="prmA"/>
    <property type="match status" value="1"/>
</dbReference>
<dbReference type="PANTHER" id="PTHR43648">
    <property type="entry name" value="ELECTRON TRANSFER FLAVOPROTEIN BETA SUBUNIT LYSINE METHYLTRANSFERASE"/>
    <property type="match status" value="1"/>
</dbReference>
<dbReference type="PANTHER" id="PTHR43648:SF1">
    <property type="entry name" value="ELECTRON TRANSFER FLAVOPROTEIN BETA SUBUNIT LYSINE METHYLTRANSFERASE"/>
    <property type="match status" value="1"/>
</dbReference>
<dbReference type="Pfam" id="PF06325">
    <property type="entry name" value="PrmA"/>
    <property type="match status" value="1"/>
</dbReference>
<dbReference type="PIRSF" id="PIRSF000401">
    <property type="entry name" value="RPL11_MTase"/>
    <property type="match status" value="1"/>
</dbReference>
<dbReference type="SUPFAM" id="SSF53335">
    <property type="entry name" value="S-adenosyl-L-methionine-dependent methyltransferases"/>
    <property type="match status" value="1"/>
</dbReference>
<comment type="function">
    <text evidence="1">Methylates ribosomal protein L11.</text>
</comment>
<comment type="catalytic activity">
    <reaction evidence="1">
        <text>L-lysyl-[protein] + 3 S-adenosyl-L-methionine = N(6),N(6),N(6)-trimethyl-L-lysyl-[protein] + 3 S-adenosyl-L-homocysteine + 3 H(+)</text>
        <dbReference type="Rhea" id="RHEA:54192"/>
        <dbReference type="Rhea" id="RHEA-COMP:9752"/>
        <dbReference type="Rhea" id="RHEA-COMP:13826"/>
        <dbReference type="ChEBI" id="CHEBI:15378"/>
        <dbReference type="ChEBI" id="CHEBI:29969"/>
        <dbReference type="ChEBI" id="CHEBI:57856"/>
        <dbReference type="ChEBI" id="CHEBI:59789"/>
        <dbReference type="ChEBI" id="CHEBI:61961"/>
    </reaction>
</comment>
<comment type="subcellular location">
    <subcellularLocation>
        <location evidence="1">Cytoplasm</location>
    </subcellularLocation>
</comment>
<comment type="similarity">
    <text evidence="1">Belongs to the methyltransferase superfamily. PrmA family.</text>
</comment>
<reference key="1">
    <citation type="submission" date="2007-04" db="EMBL/GenBank/DDBJ databases">
        <title>Genome sequence of the thermophilic hydrogen-producing bacterium Caldicellulosiruptor saccharolyticus DSM 8903.</title>
        <authorList>
            <person name="Copeland A."/>
            <person name="Lucas S."/>
            <person name="Lapidus A."/>
            <person name="Barry K."/>
            <person name="Detter J.C."/>
            <person name="Glavina del Rio T."/>
            <person name="Hammon N."/>
            <person name="Israni S."/>
            <person name="Dalin E."/>
            <person name="Tice H."/>
            <person name="Pitluck S."/>
            <person name="Kiss H."/>
            <person name="Brettin T."/>
            <person name="Bruce D."/>
            <person name="Han C."/>
            <person name="Schmutz J."/>
            <person name="Larimer F."/>
            <person name="Land M."/>
            <person name="Hauser L."/>
            <person name="Kyrpides N."/>
            <person name="Lykidis A."/>
            <person name="van de Werken H.J.G."/>
            <person name="Verhaart M.R.A."/>
            <person name="VanFossen A.L."/>
            <person name="Lewis D.L."/>
            <person name="Nichols J.D."/>
            <person name="Goorissen H.P."/>
            <person name="van Niel E.W.J."/>
            <person name="Stams F.J.M."/>
            <person name="Willquist K.U."/>
            <person name="Ward D.E."/>
            <person name="van der Oost J."/>
            <person name="Kelly R.M."/>
            <person name="Kengen S.M.W."/>
            <person name="Richardson P."/>
        </authorList>
    </citation>
    <scope>NUCLEOTIDE SEQUENCE [LARGE SCALE GENOMIC DNA]</scope>
    <source>
        <strain>ATCC 43494 / DSM 8903 / Tp8T 6331</strain>
    </source>
</reference>
<accession>A4XKA6</accession>
<keyword id="KW-0963">Cytoplasm</keyword>
<keyword id="KW-0489">Methyltransferase</keyword>
<keyword id="KW-0949">S-adenosyl-L-methionine</keyword>
<keyword id="KW-0808">Transferase</keyword>
<name>PRMA_CALS8</name>
<gene>
    <name evidence="1" type="primary">prmA</name>
    <name type="ordered locus">Csac_1754</name>
</gene>
<sequence length="302" mass="34036">MKWFEVAIKTVEEAEDAISNILYDLGANGVVIEDDEILKYPNSWDYIDENQFPKRNFAVVRAYFPESVNISELIFNIEERLKDASQYLNIGEGKIDISEVDEKDWANEWKKYYKPVEIGNIVIVPSWESYPNTKDKTVIKLDPGMAFGTGTHESTMLCLEAVQKYIKPGFDVIDIGTGSGILAIAAKKLGANRVLAVDIDDVAVKVARENAALNNVEIEIKQNDLVFGIEEKFDIAIANIIADIIIKLAKDIKNVLKEYGLFISSGIIEDRLDDVIKSFKENLLEVVEVKKLNNWCLVVARK</sequence>
<feature type="chain" id="PRO_1000046002" description="Ribosomal protein L11 methyltransferase">
    <location>
        <begin position="1"/>
        <end position="302"/>
    </location>
</feature>
<feature type="binding site" evidence="1">
    <location>
        <position position="155"/>
    </location>
    <ligand>
        <name>S-adenosyl-L-methionine</name>
        <dbReference type="ChEBI" id="CHEBI:59789"/>
    </ligand>
</feature>
<feature type="binding site" evidence="1">
    <location>
        <position position="176"/>
    </location>
    <ligand>
        <name>S-adenosyl-L-methionine</name>
        <dbReference type="ChEBI" id="CHEBI:59789"/>
    </ligand>
</feature>
<feature type="binding site" evidence="1">
    <location>
        <position position="198"/>
    </location>
    <ligand>
        <name>S-adenosyl-L-methionine</name>
        <dbReference type="ChEBI" id="CHEBI:59789"/>
    </ligand>
</feature>
<feature type="binding site" evidence="1">
    <location>
        <position position="239"/>
    </location>
    <ligand>
        <name>S-adenosyl-L-methionine</name>
        <dbReference type="ChEBI" id="CHEBI:59789"/>
    </ligand>
</feature>